<gene>
    <name evidence="1" type="primary">queA</name>
    <name type="ordered locus">FTF1215c</name>
</gene>
<organism>
    <name type="scientific">Francisella tularensis subsp. tularensis (strain FSC 198)</name>
    <dbReference type="NCBI Taxonomy" id="393115"/>
    <lineage>
        <taxon>Bacteria</taxon>
        <taxon>Pseudomonadati</taxon>
        <taxon>Pseudomonadota</taxon>
        <taxon>Gammaproteobacteria</taxon>
        <taxon>Thiotrichales</taxon>
        <taxon>Francisellaceae</taxon>
        <taxon>Francisella</taxon>
    </lineage>
</organism>
<evidence type="ECO:0000255" key="1">
    <source>
        <dbReference type="HAMAP-Rule" id="MF_00113"/>
    </source>
</evidence>
<comment type="function">
    <text evidence="1">Transfers and isomerizes the ribose moiety from AdoMet to the 7-aminomethyl group of 7-deazaguanine (preQ1-tRNA) to give epoxyqueuosine (oQ-tRNA).</text>
</comment>
<comment type="catalytic activity">
    <reaction evidence="1">
        <text>7-aminomethyl-7-carbaguanosine(34) in tRNA + S-adenosyl-L-methionine = epoxyqueuosine(34) in tRNA + adenine + L-methionine + 2 H(+)</text>
        <dbReference type="Rhea" id="RHEA:32155"/>
        <dbReference type="Rhea" id="RHEA-COMP:10342"/>
        <dbReference type="Rhea" id="RHEA-COMP:18582"/>
        <dbReference type="ChEBI" id="CHEBI:15378"/>
        <dbReference type="ChEBI" id="CHEBI:16708"/>
        <dbReference type="ChEBI" id="CHEBI:57844"/>
        <dbReference type="ChEBI" id="CHEBI:59789"/>
        <dbReference type="ChEBI" id="CHEBI:82833"/>
        <dbReference type="ChEBI" id="CHEBI:194443"/>
        <dbReference type="EC" id="2.4.99.17"/>
    </reaction>
</comment>
<comment type="pathway">
    <text evidence="1">tRNA modification; tRNA-queuosine biosynthesis.</text>
</comment>
<comment type="subunit">
    <text evidence="1">Monomer.</text>
</comment>
<comment type="subcellular location">
    <subcellularLocation>
        <location evidence="1">Cytoplasm</location>
    </subcellularLocation>
</comment>
<comment type="similarity">
    <text evidence="1">Belongs to the QueA family.</text>
</comment>
<reference key="1">
    <citation type="journal article" date="2007" name="PLoS ONE">
        <title>Genome sequencing shows that European isolates of Francisella tularensis subspecies tularensis are almost identical to US laboratory strain Schu S4.</title>
        <authorList>
            <person name="Chaudhuri R.R."/>
            <person name="Ren C.-P."/>
            <person name="Desmond L."/>
            <person name="Vincent G.A."/>
            <person name="Silman N.J."/>
            <person name="Brehm J.K."/>
            <person name="Elmore M.J."/>
            <person name="Hudson M.J."/>
            <person name="Forsman M."/>
            <person name="Isherwood K.E."/>
            <person name="Gurycova D."/>
            <person name="Minton N.P."/>
            <person name="Titball R.W."/>
            <person name="Pallen M.J."/>
            <person name="Vipond R."/>
        </authorList>
    </citation>
    <scope>NUCLEOTIDE SEQUENCE [LARGE SCALE GENOMIC DNA]</scope>
    <source>
        <strain>FSC 198</strain>
    </source>
</reference>
<proteinExistence type="inferred from homology"/>
<protein>
    <recommendedName>
        <fullName evidence="1">S-adenosylmethionine:tRNA ribosyltransferase-isomerase</fullName>
        <ecNumber evidence="1">2.4.99.17</ecNumber>
    </recommendedName>
    <alternativeName>
        <fullName evidence="1">Queuosine biosynthesis protein QueA</fullName>
    </alternativeName>
</protein>
<dbReference type="EC" id="2.4.99.17" evidence="1"/>
<dbReference type="EMBL" id="AM286280">
    <property type="protein sequence ID" value="CAL09231.1"/>
    <property type="molecule type" value="Genomic_DNA"/>
</dbReference>
<dbReference type="SMR" id="Q14H21"/>
<dbReference type="KEGG" id="ftf:FTF1215c"/>
<dbReference type="HOGENOM" id="CLU_039110_1_0_6"/>
<dbReference type="UniPathway" id="UPA00392"/>
<dbReference type="GO" id="GO:0005737">
    <property type="term" value="C:cytoplasm"/>
    <property type="evidence" value="ECO:0007669"/>
    <property type="project" value="UniProtKB-SubCell"/>
</dbReference>
<dbReference type="GO" id="GO:0051075">
    <property type="term" value="F:S-adenosylmethionine:tRNA ribosyltransferase-isomerase activity"/>
    <property type="evidence" value="ECO:0007669"/>
    <property type="project" value="UniProtKB-EC"/>
</dbReference>
<dbReference type="GO" id="GO:0008616">
    <property type="term" value="P:queuosine biosynthetic process"/>
    <property type="evidence" value="ECO:0007669"/>
    <property type="project" value="UniProtKB-UniRule"/>
</dbReference>
<dbReference type="GO" id="GO:0002099">
    <property type="term" value="P:tRNA wobble guanine modification"/>
    <property type="evidence" value="ECO:0007669"/>
    <property type="project" value="TreeGrafter"/>
</dbReference>
<dbReference type="FunFam" id="3.40.1780.10:FF:000001">
    <property type="entry name" value="S-adenosylmethionine:tRNA ribosyltransferase-isomerase"/>
    <property type="match status" value="1"/>
</dbReference>
<dbReference type="Gene3D" id="2.40.10.240">
    <property type="entry name" value="QueA-like"/>
    <property type="match status" value="1"/>
</dbReference>
<dbReference type="Gene3D" id="3.40.1780.10">
    <property type="entry name" value="QueA-like"/>
    <property type="match status" value="1"/>
</dbReference>
<dbReference type="HAMAP" id="MF_00113">
    <property type="entry name" value="QueA"/>
    <property type="match status" value="1"/>
</dbReference>
<dbReference type="InterPro" id="IPR003699">
    <property type="entry name" value="QueA"/>
</dbReference>
<dbReference type="InterPro" id="IPR042118">
    <property type="entry name" value="QueA_dom1"/>
</dbReference>
<dbReference type="InterPro" id="IPR042119">
    <property type="entry name" value="QueA_dom2"/>
</dbReference>
<dbReference type="InterPro" id="IPR036100">
    <property type="entry name" value="QueA_sf"/>
</dbReference>
<dbReference type="NCBIfam" id="NF001140">
    <property type="entry name" value="PRK00147.1"/>
    <property type="match status" value="1"/>
</dbReference>
<dbReference type="NCBIfam" id="TIGR00113">
    <property type="entry name" value="queA"/>
    <property type="match status" value="1"/>
</dbReference>
<dbReference type="PANTHER" id="PTHR30307">
    <property type="entry name" value="S-ADENOSYLMETHIONINE:TRNA RIBOSYLTRANSFERASE-ISOMERASE"/>
    <property type="match status" value="1"/>
</dbReference>
<dbReference type="PANTHER" id="PTHR30307:SF0">
    <property type="entry name" value="S-ADENOSYLMETHIONINE:TRNA RIBOSYLTRANSFERASE-ISOMERASE"/>
    <property type="match status" value="1"/>
</dbReference>
<dbReference type="Pfam" id="PF02547">
    <property type="entry name" value="Queuosine_synth"/>
    <property type="match status" value="1"/>
</dbReference>
<dbReference type="SUPFAM" id="SSF111337">
    <property type="entry name" value="QueA-like"/>
    <property type="match status" value="1"/>
</dbReference>
<name>QUEA_FRAT1</name>
<accession>Q14H21</accession>
<feature type="chain" id="PRO_1000015215" description="S-adenosylmethionine:tRNA ribosyltransferase-isomerase">
    <location>
        <begin position="1"/>
        <end position="340"/>
    </location>
</feature>
<sequence>MFMKTDDFDYKLPEELIASYPLENRDASRLLKLNKQTGEIADYKFTDFIDFINPGDLLVFNNSKVMLARLYGSKTTGAKLEYLIERIKTPKLFETHIKANRSPAIGSEIYVEDTLAKVLDKDGGMYLLEIQGDKDIYQLMEEFGHIPLPPYMKRDDEEFDAERYQTVYAQDLGSVAAPTAGLHFSKELMQQIKDKGVDIAYITLHVGSGTFKPVQVDDVESHKMHAEVISVPVEVCQKIRQTKENGGRVIAIGTTSVRSLETAGQNGQIEPYQGETDIFLYPGKKFNVVDAMITNFHLPKSTLIMLVSAFADKEKIIKAYEHAIAERYRFFSYGDAMFIF</sequence>
<keyword id="KW-0963">Cytoplasm</keyword>
<keyword id="KW-0671">Queuosine biosynthesis</keyword>
<keyword id="KW-0949">S-adenosyl-L-methionine</keyword>
<keyword id="KW-0808">Transferase</keyword>